<evidence type="ECO:0000255" key="1">
    <source>
        <dbReference type="HAMAP-Rule" id="MF_04067"/>
    </source>
</evidence>
<comment type="function">
    <text evidence="1">Mediates the nuclear export of encapsidated genomic RNAs (ribonucleoproteins, RNPs). Acts as an adapter between viral RNPs complexes and the nuclear export machinery of the cell. Possesses no intrinsic RNA-binding activity, but includes a C-terminal M1-binding domain. This domain is believed to allow recognition of RNPs bound to the protein M1. Since protein M1 is not available in large quantities before late stages of infection, such an indirect recognition mechanism probably ensures that genomic RNPs are not exported from the host nucleus until sufficient quantities of viral mRNA and progeny genomic RNA have been synthesized. Furthermore, the RNPs enter the host cytoplasm only when associated with the M1 protein that is necessary to guide them to the plasma membrane. May down-regulate viral RNA synthesis when overproduced.</text>
</comment>
<comment type="subunit">
    <text evidence="1">Interacts with protein M1. May interact with host nucleoporin RAB/HRB and exportin XPO1/CRM1.</text>
</comment>
<comment type="subcellular location">
    <subcellularLocation>
        <location evidence="1">Virion</location>
    </subcellularLocation>
    <subcellularLocation>
        <location evidence="1">Host nucleus</location>
    </subcellularLocation>
</comment>
<comment type="alternative products">
    <event type="alternative splicing"/>
    <isoform>
        <id>A4GBY2-1</id>
        <name>NEP</name>
        <name>NS2</name>
        <sequence type="displayed"/>
    </isoform>
    <isoform>
        <id>A4GBY3-1</id>
        <name>NS1</name>
        <sequence type="external"/>
    </isoform>
</comment>
<comment type="miscellaneous">
    <text>Average number present in a viral particle is estimated to be 130-200 molecules.</text>
</comment>
<comment type="similarity">
    <text evidence="1">Belongs to the influenza viruses NEP family.</text>
</comment>
<proteinExistence type="inferred from homology"/>
<keyword id="KW-0025">Alternative splicing</keyword>
<keyword id="KW-1048">Host nucleus</keyword>
<keyword id="KW-0945">Host-virus interaction</keyword>
<keyword id="KW-0813">Transport</keyword>
<keyword id="KW-0946">Virion</keyword>
<gene>
    <name evidence="1" type="primary">NS</name>
</gene>
<name>NEP_I77AA</name>
<accession>A4GBY2</accession>
<reference key="1">
    <citation type="submission" date="2007-03" db="EMBL/GenBank/DDBJ databases">
        <title>The NIAID influenza genome sequencing project.</title>
        <authorList>
            <person name="Ghedin E."/>
            <person name="Spiro D."/>
            <person name="Miller N."/>
            <person name="Zaborsky J."/>
            <person name="Feldblyum T."/>
            <person name="Subbu V."/>
            <person name="Shumway M."/>
            <person name="Sparenborg J."/>
            <person name="Groveman L."/>
            <person name="Halpin R."/>
            <person name="Sitz J."/>
            <person name="Koo H."/>
            <person name="Salzberg S.L."/>
            <person name="Webster R.G."/>
            <person name="Hoffmann E."/>
            <person name="Krauss S."/>
            <person name="Naeve C."/>
            <person name="Bao Y."/>
            <person name="Bolotov P."/>
            <person name="Dernovoy D."/>
            <person name="Kiryutin B."/>
            <person name="Lipman D.J."/>
            <person name="Tatusova T."/>
        </authorList>
    </citation>
    <scope>NUCLEOTIDE SEQUENCE [GENOMIC RNA]</scope>
</reference>
<reference key="2">
    <citation type="submission" date="2007-03" db="EMBL/GenBank/DDBJ databases">
        <authorList>
            <consortium name="The NIAID Influenza Genome Sequencing Consortium"/>
        </authorList>
    </citation>
    <scope>NUCLEOTIDE SEQUENCE [GENOMIC RNA]</scope>
</reference>
<sequence length="121" mass="14379">MDPNTVSSFQDILMRMSKMQLGSSSEDLNGMITQFESLKLYRDSLGEAVMRMGDLHSLQNRNGKWREQLGQKFEEIRWLIEEVRHRLKITENSFEQITFMQALQLLFEVEQEIRTFSFQLI</sequence>
<dbReference type="EMBL" id="CY020297">
    <property type="protein sequence ID" value="ABO38071.1"/>
    <property type="molecule type" value="Viral_cRNA"/>
</dbReference>
<dbReference type="SMR" id="A4GBY2"/>
<dbReference type="Proteomes" id="UP000008025">
    <property type="component" value="Genome"/>
</dbReference>
<dbReference type="GO" id="GO:0042025">
    <property type="term" value="C:host cell nucleus"/>
    <property type="evidence" value="ECO:0007669"/>
    <property type="project" value="UniProtKB-SubCell"/>
</dbReference>
<dbReference type="GO" id="GO:0044423">
    <property type="term" value="C:virion component"/>
    <property type="evidence" value="ECO:0007669"/>
    <property type="project" value="UniProtKB-UniRule"/>
</dbReference>
<dbReference type="GO" id="GO:0039675">
    <property type="term" value="P:exit of virus from host cell nucleus through nuclear pore"/>
    <property type="evidence" value="ECO:0007669"/>
    <property type="project" value="UniProtKB-UniRule"/>
</dbReference>
<dbReference type="Gene3D" id="1.10.287.230">
    <property type="match status" value="1"/>
</dbReference>
<dbReference type="Gene3D" id="1.10.287.10">
    <property type="entry name" value="S15/NS1, RNA-binding"/>
    <property type="match status" value="1"/>
</dbReference>
<dbReference type="HAMAP" id="MF_04067">
    <property type="entry name" value="INFV_NEP"/>
    <property type="match status" value="1"/>
</dbReference>
<dbReference type="InterPro" id="IPR000968">
    <property type="entry name" value="Flu_NS2"/>
</dbReference>
<dbReference type="Pfam" id="PF00601">
    <property type="entry name" value="Flu_NS2"/>
    <property type="match status" value="1"/>
</dbReference>
<dbReference type="SUPFAM" id="SSF101156">
    <property type="entry name" value="Nonstructural protein ns2, Nep, M1-binding domain"/>
    <property type="match status" value="1"/>
</dbReference>
<organismHost>
    <name type="scientific">Aves</name>
    <dbReference type="NCBI Taxonomy" id="8782"/>
</organismHost>
<organismHost>
    <name type="scientific">Homo sapiens</name>
    <name type="common">Human</name>
    <dbReference type="NCBI Taxonomy" id="9606"/>
</organismHost>
<organismHost>
    <name type="scientific">Sus scrofa</name>
    <name type="common">Pig</name>
    <dbReference type="NCBI Taxonomy" id="9823"/>
</organismHost>
<feature type="chain" id="PRO_0000372957" description="Nuclear export protein">
    <location>
        <begin position="1"/>
        <end position="121"/>
    </location>
</feature>
<feature type="short sequence motif" description="Nuclear export signal" evidence="1">
    <location>
        <begin position="12"/>
        <end position="21"/>
    </location>
</feature>
<feature type="short sequence motif" description="Nuclear export signal" evidence="1">
    <location>
        <begin position="85"/>
        <end position="94"/>
    </location>
</feature>
<protein>
    <recommendedName>
        <fullName evidence="1">Nuclear export protein</fullName>
        <shortName evidence="1">NEP</shortName>
    </recommendedName>
    <alternativeName>
        <fullName evidence="1">Non-structural protein 2</fullName>
        <shortName evidence="1">NS2</shortName>
    </alternativeName>
</protein>
<organism>
    <name type="scientific">Influenza A virus (strain A/Brazil/11/1978 H1N1)</name>
    <dbReference type="NCBI Taxonomy" id="393560"/>
    <lineage>
        <taxon>Viruses</taxon>
        <taxon>Riboviria</taxon>
        <taxon>Orthornavirae</taxon>
        <taxon>Negarnaviricota</taxon>
        <taxon>Polyploviricotina</taxon>
        <taxon>Insthoviricetes</taxon>
        <taxon>Articulavirales</taxon>
        <taxon>Orthomyxoviridae</taxon>
        <taxon>Alphainfluenzavirus</taxon>
        <taxon>Alphainfluenzavirus influenzae</taxon>
        <taxon>Influenza A virus</taxon>
    </lineage>
</organism>